<accession>P66704</accession>
<accession>Q9JR06</accession>
<keyword id="KW-0240">DNA-directed RNA polymerase</keyword>
<keyword id="KW-0548">Nucleotidyltransferase</keyword>
<keyword id="KW-1185">Reference proteome</keyword>
<keyword id="KW-0804">Transcription</keyword>
<keyword id="KW-0808">Transferase</keyword>
<evidence type="ECO:0000255" key="1">
    <source>
        <dbReference type="HAMAP-Rule" id="MF_00059"/>
    </source>
</evidence>
<protein>
    <recommendedName>
        <fullName evidence="1">DNA-directed RNA polymerase subunit alpha</fullName>
        <shortName evidence="1">RNAP subunit alpha</shortName>
        <ecNumber evidence="1">2.7.7.6</ecNumber>
    </recommendedName>
    <alternativeName>
        <fullName evidence="1">RNA polymerase subunit alpha</fullName>
    </alternativeName>
    <alternativeName>
        <fullName evidence="1">Transcriptase subunit alpha</fullName>
    </alternativeName>
</protein>
<dbReference type="EC" id="2.7.7.6" evidence="1"/>
<dbReference type="EMBL" id="AE002098">
    <property type="protein sequence ID" value="AAF40625.1"/>
    <property type="molecule type" value="Genomic_DNA"/>
</dbReference>
<dbReference type="PIR" id="H81229">
    <property type="entry name" value="H81229"/>
</dbReference>
<dbReference type="RefSeq" id="NP_273226.1">
    <property type="nucleotide sequence ID" value="NC_003112.2"/>
</dbReference>
<dbReference type="RefSeq" id="WP_002215457.1">
    <property type="nucleotide sequence ID" value="NC_003112.2"/>
</dbReference>
<dbReference type="SMR" id="P66704"/>
<dbReference type="FunCoup" id="P66704">
    <property type="interactions" value="477"/>
</dbReference>
<dbReference type="STRING" id="122586.NMB0168"/>
<dbReference type="PaxDb" id="122586-NMB0168"/>
<dbReference type="GeneID" id="93387243"/>
<dbReference type="KEGG" id="nme:NMB0168"/>
<dbReference type="PATRIC" id="fig|122586.8.peg.209"/>
<dbReference type="HOGENOM" id="CLU_053084_0_0_4"/>
<dbReference type="InParanoid" id="P66704"/>
<dbReference type="OrthoDB" id="9805706at2"/>
<dbReference type="Proteomes" id="UP000000425">
    <property type="component" value="Chromosome"/>
</dbReference>
<dbReference type="GO" id="GO:0005737">
    <property type="term" value="C:cytoplasm"/>
    <property type="evidence" value="ECO:0000318"/>
    <property type="project" value="GO_Central"/>
</dbReference>
<dbReference type="GO" id="GO:0000428">
    <property type="term" value="C:DNA-directed RNA polymerase complex"/>
    <property type="evidence" value="ECO:0007669"/>
    <property type="project" value="UniProtKB-KW"/>
</dbReference>
<dbReference type="GO" id="GO:0003677">
    <property type="term" value="F:DNA binding"/>
    <property type="evidence" value="ECO:0007669"/>
    <property type="project" value="UniProtKB-UniRule"/>
</dbReference>
<dbReference type="GO" id="GO:0003899">
    <property type="term" value="F:DNA-directed RNA polymerase activity"/>
    <property type="evidence" value="ECO:0007669"/>
    <property type="project" value="UniProtKB-UniRule"/>
</dbReference>
<dbReference type="GO" id="GO:0046983">
    <property type="term" value="F:protein dimerization activity"/>
    <property type="evidence" value="ECO:0007669"/>
    <property type="project" value="InterPro"/>
</dbReference>
<dbReference type="GO" id="GO:0006351">
    <property type="term" value="P:DNA-templated transcription"/>
    <property type="evidence" value="ECO:0007669"/>
    <property type="project" value="UniProtKB-UniRule"/>
</dbReference>
<dbReference type="CDD" id="cd06928">
    <property type="entry name" value="RNAP_alpha_NTD"/>
    <property type="match status" value="1"/>
</dbReference>
<dbReference type="FunFam" id="1.10.150.20:FF:000001">
    <property type="entry name" value="DNA-directed RNA polymerase subunit alpha"/>
    <property type="match status" value="1"/>
</dbReference>
<dbReference type="FunFam" id="2.170.120.12:FF:000001">
    <property type="entry name" value="DNA-directed RNA polymerase subunit alpha"/>
    <property type="match status" value="1"/>
</dbReference>
<dbReference type="Gene3D" id="1.10.150.20">
    <property type="entry name" value="5' to 3' exonuclease, C-terminal subdomain"/>
    <property type="match status" value="1"/>
</dbReference>
<dbReference type="Gene3D" id="2.170.120.12">
    <property type="entry name" value="DNA-directed RNA polymerase, insert domain"/>
    <property type="match status" value="1"/>
</dbReference>
<dbReference type="Gene3D" id="3.30.1360.10">
    <property type="entry name" value="RNA polymerase, RBP11-like subunit"/>
    <property type="match status" value="1"/>
</dbReference>
<dbReference type="HAMAP" id="MF_00059">
    <property type="entry name" value="RNApol_bact_RpoA"/>
    <property type="match status" value="1"/>
</dbReference>
<dbReference type="InterPro" id="IPR011262">
    <property type="entry name" value="DNA-dir_RNA_pol_insert"/>
</dbReference>
<dbReference type="InterPro" id="IPR011263">
    <property type="entry name" value="DNA-dir_RNA_pol_RpoA/D/Rpb3"/>
</dbReference>
<dbReference type="InterPro" id="IPR011773">
    <property type="entry name" value="DNA-dir_RpoA"/>
</dbReference>
<dbReference type="InterPro" id="IPR036603">
    <property type="entry name" value="RBP11-like"/>
</dbReference>
<dbReference type="InterPro" id="IPR011260">
    <property type="entry name" value="RNAP_asu_C"/>
</dbReference>
<dbReference type="InterPro" id="IPR036643">
    <property type="entry name" value="RNApol_insert_sf"/>
</dbReference>
<dbReference type="NCBIfam" id="NF003513">
    <property type="entry name" value="PRK05182.1-2"/>
    <property type="match status" value="1"/>
</dbReference>
<dbReference type="NCBIfam" id="NF003519">
    <property type="entry name" value="PRK05182.2-5"/>
    <property type="match status" value="1"/>
</dbReference>
<dbReference type="NCBIfam" id="TIGR02027">
    <property type="entry name" value="rpoA"/>
    <property type="match status" value="1"/>
</dbReference>
<dbReference type="Pfam" id="PF01000">
    <property type="entry name" value="RNA_pol_A_bac"/>
    <property type="match status" value="1"/>
</dbReference>
<dbReference type="Pfam" id="PF03118">
    <property type="entry name" value="RNA_pol_A_CTD"/>
    <property type="match status" value="1"/>
</dbReference>
<dbReference type="Pfam" id="PF01193">
    <property type="entry name" value="RNA_pol_L"/>
    <property type="match status" value="1"/>
</dbReference>
<dbReference type="SMART" id="SM00662">
    <property type="entry name" value="RPOLD"/>
    <property type="match status" value="1"/>
</dbReference>
<dbReference type="SUPFAM" id="SSF47789">
    <property type="entry name" value="C-terminal domain of RNA polymerase alpha subunit"/>
    <property type="match status" value="1"/>
</dbReference>
<dbReference type="SUPFAM" id="SSF56553">
    <property type="entry name" value="Insert subdomain of RNA polymerase alpha subunit"/>
    <property type="match status" value="1"/>
</dbReference>
<dbReference type="SUPFAM" id="SSF55257">
    <property type="entry name" value="RBP11-like subunits of RNA polymerase"/>
    <property type="match status" value="1"/>
</dbReference>
<sequence length="328" mass="36076">MQNSTTEFLKPRQIDVNTFSATRAKVSMQPFERGFGHTLGNALRRILLSSMNGFAPTEVAIAGVLHEYSTVDGIQEDVVDILLNIKGIVFKLHGRSQVQLVLKKSGSGVVSAGDIELPHDVEILNPGHVICHLADNGQIEMEIKVEQGRGYQSVSGRQVVRDENRQIGAIQLDASFSPISRVSFEVEPARVEQRTDLDKLVLDIETDGSIDPEEAVRSAARILIDQMSIFADLQGTPVEEVEEKAPPIDPVLLRPVDDLELTVRSANCLKAEDIYYIGDLIQRTETELLKTPNLGRKSLNEIKEVLASKGLTLGSKLEAWPPVGLEKP</sequence>
<reference key="1">
    <citation type="journal article" date="2000" name="Science">
        <title>Complete genome sequence of Neisseria meningitidis serogroup B strain MC58.</title>
        <authorList>
            <person name="Tettelin H."/>
            <person name="Saunders N.J."/>
            <person name="Heidelberg J.F."/>
            <person name="Jeffries A.C."/>
            <person name="Nelson K.E."/>
            <person name="Eisen J.A."/>
            <person name="Ketchum K.A."/>
            <person name="Hood D.W."/>
            <person name="Peden J.F."/>
            <person name="Dodson R.J."/>
            <person name="Nelson W.C."/>
            <person name="Gwinn M.L."/>
            <person name="DeBoy R.T."/>
            <person name="Peterson J.D."/>
            <person name="Hickey E.K."/>
            <person name="Haft D.H."/>
            <person name="Salzberg S.L."/>
            <person name="White O."/>
            <person name="Fleischmann R.D."/>
            <person name="Dougherty B.A."/>
            <person name="Mason T.M."/>
            <person name="Ciecko A."/>
            <person name="Parksey D.S."/>
            <person name="Blair E."/>
            <person name="Cittone H."/>
            <person name="Clark E.B."/>
            <person name="Cotton M.D."/>
            <person name="Utterback T.R."/>
            <person name="Khouri H.M."/>
            <person name="Qin H."/>
            <person name="Vamathevan J.J."/>
            <person name="Gill J."/>
            <person name="Scarlato V."/>
            <person name="Masignani V."/>
            <person name="Pizza M."/>
            <person name="Grandi G."/>
            <person name="Sun L."/>
            <person name="Smith H.O."/>
            <person name="Fraser C.M."/>
            <person name="Moxon E.R."/>
            <person name="Rappuoli R."/>
            <person name="Venter J.C."/>
        </authorList>
    </citation>
    <scope>NUCLEOTIDE SEQUENCE [LARGE SCALE GENOMIC DNA]</scope>
    <source>
        <strain>ATCC BAA-335 / MC58</strain>
    </source>
</reference>
<organism>
    <name type="scientific">Neisseria meningitidis serogroup B (strain ATCC BAA-335 / MC58)</name>
    <dbReference type="NCBI Taxonomy" id="122586"/>
    <lineage>
        <taxon>Bacteria</taxon>
        <taxon>Pseudomonadati</taxon>
        <taxon>Pseudomonadota</taxon>
        <taxon>Betaproteobacteria</taxon>
        <taxon>Neisseriales</taxon>
        <taxon>Neisseriaceae</taxon>
        <taxon>Neisseria</taxon>
    </lineage>
</organism>
<comment type="function">
    <text evidence="1">DNA-dependent RNA polymerase catalyzes the transcription of DNA into RNA using the four ribonucleoside triphosphates as substrates.</text>
</comment>
<comment type="catalytic activity">
    <reaction evidence="1">
        <text>RNA(n) + a ribonucleoside 5'-triphosphate = RNA(n+1) + diphosphate</text>
        <dbReference type="Rhea" id="RHEA:21248"/>
        <dbReference type="Rhea" id="RHEA-COMP:14527"/>
        <dbReference type="Rhea" id="RHEA-COMP:17342"/>
        <dbReference type="ChEBI" id="CHEBI:33019"/>
        <dbReference type="ChEBI" id="CHEBI:61557"/>
        <dbReference type="ChEBI" id="CHEBI:140395"/>
        <dbReference type="EC" id="2.7.7.6"/>
    </reaction>
</comment>
<comment type="subunit">
    <text evidence="1">Homodimer. The RNAP catalytic core consists of 2 alpha, 1 beta, 1 beta' and 1 omega subunit. When a sigma factor is associated with the core the holoenzyme is formed, which can initiate transcription.</text>
</comment>
<comment type="domain">
    <text evidence="1">The N-terminal domain is essential for RNAP assembly and basal transcription, whereas the C-terminal domain is involved in interaction with transcriptional regulators and with upstream promoter elements.</text>
</comment>
<comment type="similarity">
    <text evidence="1">Belongs to the RNA polymerase alpha chain family.</text>
</comment>
<name>RPOA_NEIMB</name>
<feature type="chain" id="PRO_0000175347" description="DNA-directed RNA polymerase subunit alpha">
    <location>
        <begin position="1"/>
        <end position="328"/>
    </location>
</feature>
<feature type="region of interest" description="Alpha N-terminal domain (alpha-NTD)" evidence="1">
    <location>
        <begin position="1"/>
        <end position="234"/>
    </location>
</feature>
<feature type="region of interest" description="Alpha C-terminal domain (alpha-CTD)" evidence="1">
    <location>
        <begin position="248"/>
        <end position="328"/>
    </location>
</feature>
<proteinExistence type="inferred from homology"/>
<gene>
    <name evidence="1" type="primary">rpoA</name>
    <name type="ordered locus">NMB0168</name>
</gene>